<protein>
    <recommendedName>
        <fullName evidence="1">SsrA-binding protein</fullName>
    </recommendedName>
    <alternativeName>
        <fullName evidence="1">Small protein B</fullName>
    </alternativeName>
</protein>
<evidence type="ECO:0000255" key="1">
    <source>
        <dbReference type="HAMAP-Rule" id="MF_00023"/>
    </source>
</evidence>
<accession>B8F4Q7</accession>
<name>SSRP_GLAP5</name>
<keyword id="KW-0963">Cytoplasm</keyword>
<keyword id="KW-1185">Reference proteome</keyword>
<keyword id="KW-0694">RNA-binding</keyword>
<gene>
    <name evidence="1" type="primary">smpB</name>
    <name type="ordered locus">HAPS_0661</name>
</gene>
<feature type="chain" id="PRO_1000116866" description="SsrA-binding protein">
    <location>
        <begin position="1"/>
        <end position="158"/>
    </location>
</feature>
<organism>
    <name type="scientific">Glaesserella parasuis serovar 5 (strain SH0165)</name>
    <name type="common">Haemophilus parasuis</name>
    <dbReference type="NCBI Taxonomy" id="557723"/>
    <lineage>
        <taxon>Bacteria</taxon>
        <taxon>Pseudomonadati</taxon>
        <taxon>Pseudomonadota</taxon>
        <taxon>Gammaproteobacteria</taxon>
        <taxon>Pasteurellales</taxon>
        <taxon>Pasteurellaceae</taxon>
        <taxon>Glaesserella</taxon>
    </lineage>
</organism>
<reference key="1">
    <citation type="journal article" date="2009" name="J. Bacteriol.">
        <title>Complete genome sequence of Haemophilus parasuis SH0165.</title>
        <authorList>
            <person name="Yue M."/>
            <person name="Yang F."/>
            <person name="Yang J."/>
            <person name="Bei W."/>
            <person name="Cai X."/>
            <person name="Chen L."/>
            <person name="Dong J."/>
            <person name="Zhou R."/>
            <person name="Jin M."/>
            <person name="Jin Q."/>
            <person name="Chen H."/>
        </authorList>
    </citation>
    <scope>NUCLEOTIDE SEQUENCE [LARGE SCALE GENOMIC DNA]</scope>
    <source>
        <strain>SH0165</strain>
    </source>
</reference>
<sequence length="158" mass="18016">MSKKPKVASNTIALNKRARHEYFIEEEIEAGLELQGWEVKSLRAGKANIGDSYVTFRNGEAFLFGGTITPLNVASTHIVCDPTRTRKLLLNKRELDTLYGKVSRDGFTVVALSLYWKNAWAKVKIGLAKGKKLHDKREDIKDREWQVAKQRIMKNANR</sequence>
<dbReference type="EMBL" id="CP001321">
    <property type="protein sequence ID" value="ACL32309.1"/>
    <property type="molecule type" value="Genomic_DNA"/>
</dbReference>
<dbReference type="RefSeq" id="WP_010786708.1">
    <property type="nucleotide sequence ID" value="NC_011852.1"/>
</dbReference>
<dbReference type="SMR" id="B8F4Q7"/>
<dbReference type="STRING" id="557723.HAPS_0661"/>
<dbReference type="GeneID" id="66619029"/>
<dbReference type="KEGG" id="hap:HAPS_0661"/>
<dbReference type="HOGENOM" id="CLU_108953_3_0_6"/>
<dbReference type="Proteomes" id="UP000006743">
    <property type="component" value="Chromosome"/>
</dbReference>
<dbReference type="GO" id="GO:0005829">
    <property type="term" value="C:cytosol"/>
    <property type="evidence" value="ECO:0007669"/>
    <property type="project" value="TreeGrafter"/>
</dbReference>
<dbReference type="GO" id="GO:0003723">
    <property type="term" value="F:RNA binding"/>
    <property type="evidence" value="ECO:0007669"/>
    <property type="project" value="UniProtKB-UniRule"/>
</dbReference>
<dbReference type="GO" id="GO:0070929">
    <property type="term" value="P:trans-translation"/>
    <property type="evidence" value="ECO:0007669"/>
    <property type="project" value="UniProtKB-UniRule"/>
</dbReference>
<dbReference type="CDD" id="cd09294">
    <property type="entry name" value="SmpB"/>
    <property type="match status" value="1"/>
</dbReference>
<dbReference type="Gene3D" id="2.40.280.10">
    <property type="match status" value="1"/>
</dbReference>
<dbReference type="HAMAP" id="MF_00023">
    <property type="entry name" value="SmpB"/>
    <property type="match status" value="1"/>
</dbReference>
<dbReference type="InterPro" id="IPR023620">
    <property type="entry name" value="SmpB"/>
</dbReference>
<dbReference type="InterPro" id="IPR000037">
    <property type="entry name" value="SsrA-bd_prot"/>
</dbReference>
<dbReference type="InterPro" id="IPR020081">
    <property type="entry name" value="SsrA-bd_prot_CS"/>
</dbReference>
<dbReference type="NCBIfam" id="NF003843">
    <property type="entry name" value="PRK05422.1"/>
    <property type="match status" value="1"/>
</dbReference>
<dbReference type="NCBIfam" id="TIGR00086">
    <property type="entry name" value="smpB"/>
    <property type="match status" value="1"/>
</dbReference>
<dbReference type="PANTHER" id="PTHR30308:SF2">
    <property type="entry name" value="SSRA-BINDING PROTEIN"/>
    <property type="match status" value="1"/>
</dbReference>
<dbReference type="PANTHER" id="PTHR30308">
    <property type="entry name" value="TMRNA-BINDING COMPONENT OF TRANS-TRANSLATION TAGGING COMPLEX"/>
    <property type="match status" value="1"/>
</dbReference>
<dbReference type="Pfam" id="PF01668">
    <property type="entry name" value="SmpB"/>
    <property type="match status" value="1"/>
</dbReference>
<dbReference type="SUPFAM" id="SSF74982">
    <property type="entry name" value="Small protein B (SmpB)"/>
    <property type="match status" value="1"/>
</dbReference>
<dbReference type="PROSITE" id="PS01317">
    <property type="entry name" value="SSRP"/>
    <property type="match status" value="1"/>
</dbReference>
<proteinExistence type="inferred from homology"/>
<comment type="function">
    <text evidence="1">Required for rescue of stalled ribosomes mediated by trans-translation. Binds to transfer-messenger RNA (tmRNA), required for stable association of tmRNA with ribosomes. tmRNA and SmpB together mimic tRNA shape, replacing the anticodon stem-loop with SmpB. tmRNA is encoded by the ssrA gene; the 2 termini fold to resemble tRNA(Ala) and it encodes a 'tag peptide', a short internal open reading frame. During trans-translation Ala-aminoacylated tmRNA acts like a tRNA, entering the A-site of stalled ribosomes, displacing the stalled mRNA. The ribosome then switches to translate the ORF on the tmRNA; the nascent peptide is terminated with the 'tag peptide' encoded by the tmRNA and targeted for degradation. The ribosome is freed to recommence translation, which seems to be the essential function of trans-translation.</text>
</comment>
<comment type="subcellular location">
    <subcellularLocation>
        <location evidence="1">Cytoplasm</location>
    </subcellularLocation>
    <text evidence="1">The tmRNA-SmpB complex associates with stalled 70S ribosomes.</text>
</comment>
<comment type="similarity">
    <text evidence="1">Belongs to the SmpB family.</text>
</comment>